<sequence length="466" mass="52539">MAAISRVIDLFTSDQEYIGKTVRAQGWVRTKRDSKAGVSFIELNDGSCLRNLQVVADQGHPEYRQLLESITTGCAVMVEGSIAYSPGKGQTIELKADRITLYGTADPAVYPLQKKRHSFEFLRQIGHLRPRTNTIGAVSRVRNRLSYAIHQFFQDRGFYYIHTPIITASDCEGAGEMFRVTTLDAQNAPAKVPEEVYRADFFGKPAFLTVSGQLQAEIYALALGRVYTFGPTFRAENSNTSRHLAEFWMVEPEMAFCDLEGDLEIAQALIRHLIGVALQDCAEDLDFFTRFIEPTLRGTLETVAFSPFETVTYTEAVRILKESGENFEFPVEWGNDLQAEHERYLTEKVFRKPAAVIHFPRALKPFYMRVNDDGNTVAAMDILVPGTGEIIGGSQREERPDILVEQMRLKSVAPEDYKWYLDLREFGSVPHAGFGMGLERLVQFVTGLPNIREVIPFPRTPGHAEF</sequence>
<reference key="1">
    <citation type="submission" date="2006-10" db="EMBL/GenBank/DDBJ databases">
        <title>Complete sequence of Syntrophobacter fumaroxidans MPOB.</title>
        <authorList>
            <consortium name="US DOE Joint Genome Institute"/>
            <person name="Copeland A."/>
            <person name="Lucas S."/>
            <person name="Lapidus A."/>
            <person name="Barry K."/>
            <person name="Detter J.C."/>
            <person name="Glavina del Rio T."/>
            <person name="Hammon N."/>
            <person name="Israni S."/>
            <person name="Pitluck S."/>
            <person name="Goltsman E.G."/>
            <person name="Martinez M."/>
            <person name="Schmutz J."/>
            <person name="Larimer F."/>
            <person name="Land M."/>
            <person name="Hauser L."/>
            <person name="Kyrpides N."/>
            <person name="Kim E."/>
            <person name="Boone D.R."/>
            <person name="Brockman F."/>
            <person name="Culley D."/>
            <person name="Ferry J."/>
            <person name="Gunsalus R."/>
            <person name="McInerney M.J."/>
            <person name="Morrison M."/>
            <person name="Plugge C."/>
            <person name="Rohlin L."/>
            <person name="Scholten J."/>
            <person name="Sieber J."/>
            <person name="Stams A.J.M."/>
            <person name="Worm P."/>
            <person name="Henstra A.M."/>
            <person name="Richardson P."/>
        </authorList>
    </citation>
    <scope>NUCLEOTIDE SEQUENCE [LARGE SCALE GENOMIC DNA]</scope>
    <source>
        <strain>DSM 10017 / MPOB</strain>
    </source>
</reference>
<name>SYN_SYNFM</name>
<feature type="chain" id="PRO_1000128216" description="Asparagine--tRNA ligase">
    <location>
        <begin position="1"/>
        <end position="466"/>
    </location>
</feature>
<protein>
    <recommendedName>
        <fullName evidence="1">Asparagine--tRNA ligase</fullName>
        <ecNumber evidence="1">6.1.1.22</ecNumber>
    </recommendedName>
    <alternativeName>
        <fullName evidence="1">Asparaginyl-tRNA synthetase</fullName>
        <shortName evidence="1">AsnRS</shortName>
    </alternativeName>
</protein>
<organism>
    <name type="scientific">Syntrophobacter fumaroxidans (strain DSM 10017 / MPOB)</name>
    <dbReference type="NCBI Taxonomy" id="335543"/>
    <lineage>
        <taxon>Bacteria</taxon>
        <taxon>Pseudomonadati</taxon>
        <taxon>Thermodesulfobacteriota</taxon>
        <taxon>Syntrophobacteria</taxon>
        <taxon>Syntrophobacterales</taxon>
        <taxon>Syntrophobacteraceae</taxon>
        <taxon>Syntrophobacter</taxon>
    </lineage>
</organism>
<evidence type="ECO:0000255" key="1">
    <source>
        <dbReference type="HAMAP-Rule" id="MF_00534"/>
    </source>
</evidence>
<proteinExistence type="inferred from homology"/>
<accession>A0LL53</accession>
<dbReference type="EC" id="6.1.1.22" evidence="1"/>
<dbReference type="EMBL" id="CP000478">
    <property type="protein sequence ID" value="ABK18155.1"/>
    <property type="molecule type" value="Genomic_DNA"/>
</dbReference>
<dbReference type="RefSeq" id="WP_011699323.1">
    <property type="nucleotide sequence ID" value="NC_008554.1"/>
</dbReference>
<dbReference type="SMR" id="A0LL53"/>
<dbReference type="FunCoup" id="A0LL53">
    <property type="interactions" value="460"/>
</dbReference>
<dbReference type="STRING" id="335543.Sfum_2475"/>
<dbReference type="KEGG" id="sfu:Sfum_2475"/>
<dbReference type="eggNOG" id="COG0017">
    <property type="taxonomic scope" value="Bacteria"/>
</dbReference>
<dbReference type="HOGENOM" id="CLU_004553_2_0_7"/>
<dbReference type="InParanoid" id="A0LL53"/>
<dbReference type="OrthoDB" id="9802326at2"/>
<dbReference type="Proteomes" id="UP000001784">
    <property type="component" value="Chromosome"/>
</dbReference>
<dbReference type="GO" id="GO:0005737">
    <property type="term" value="C:cytoplasm"/>
    <property type="evidence" value="ECO:0007669"/>
    <property type="project" value="UniProtKB-SubCell"/>
</dbReference>
<dbReference type="GO" id="GO:0004816">
    <property type="term" value="F:asparagine-tRNA ligase activity"/>
    <property type="evidence" value="ECO:0007669"/>
    <property type="project" value="UniProtKB-UniRule"/>
</dbReference>
<dbReference type="GO" id="GO:0005524">
    <property type="term" value="F:ATP binding"/>
    <property type="evidence" value="ECO:0007669"/>
    <property type="project" value="UniProtKB-UniRule"/>
</dbReference>
<dbReference type="GO" id="GO:0003676">
    <property type="term" value="F:nucleic acid binding"/>
    <property type="evidence" value="ECO:0007669"/>
    <property type="project" value="InterPro"/>
</dbReference>
<dbReference type="GO" id="GO:0006421">
    <property type="term" value="P:asparaginyl-tRNA aminoacylation"/>
    <property type="evidence" value="ECO:0007669"/>
    <property type="project" value="UniProtKB-UniRule"/>
</dbReference>
<dbReference type="CDD" id="cd00776">
    <property type="entry name" value="AsxRS_core"/>
    <property type="match status" value="1"/>
</dbReference>
<dbReference type="CDD" id="cd04318">
    <property type="entry name" value="EcAsnRS_like_N"/>
    <property type="match status" value="1"/>
</dbReference>
<dbReference type="FunFam" id="3.30.930.10:FF:000016">
    <property type="entry name" value="Asparagine--tRNA ligase"/>
    <property type="match status" value="1"/>
</dbReference>
<dbReference type="Gene3D" id="3.30.930.10">
    <property type="entry name" value="Bira Bifunctional Protein, Domain 2"/>
    <property type="match status" value="1"/>
</dbReference>
<dbReference type="Gene3D" id="2.40.50.140">
    <property type="entry name" value="Nucleic acid-binding proteins"/>
    <property type="match status" value="1"/>
</dbReference>
<dbReference type="HAMAP" id="MF_00534">
    <property type="entry name" value="Asn_tRNA_synth"/>
    <property type="match status" value="1"/>
</dbReference>
<dbReference type="InterPro" id="IPR004364">
    <property type="entry name" value="Aa-tRNA-synt_II"/>
</dbReference>
<dbReference type="InterPro" id="IPR006195">
    <property type="entry name" value="aa-tRNA-synth_II"/>
</dbReference>
<dbReference type="InterPro" id="IPR045864">
    <property type="entry name" value="aa-tRNA-synth_II/BPL/LPL"/>
</dbReference>
<dbReference type="InterPro" id="IPR004522">
    <property type="entry name" value="Asn-tRNA-ligase"/>
</dbReference>
<dbReference type="InterPro" id="IPR002312">
    <property type="entry name" value="Asp/Asn-tRNA-synth_IIb"/>
</dbReference>
<dbReference type="InterPro" id="IPR012340">
    <property type="entry name" value="NA-bd_OB-fold"/>
</dbReference>
<dbReference type="InterPro" id="IPR004365">
    <property type="entry name" value="NA-bd_OB_tRNA"/>
</dbReference>
<dbReference type="NCBIfam" id="TIGR00457">
    <property type="entry name" value="asnS"/>
    <property type="match status" value="1"/>
</dbReference>
<dbReference type="NCBIfam" id="NF003037">
    <property type="entry name" value="PRK03932.1"/>
    <property type="match status" value="1"/>
</dbReference>
<dbReference type="PANTHER" id="PTHR22594:SF34">
    <property type="entry name" value="ASPARAGINE--TRNA LIGASE, MITOCHONDRIAL-RELATED"/>
    <property type="match status" value="1"/>
</dbReference>
<dbReference type="PANTHER" id="PTHR22594">
    <property type="entry name" value="ASPARTYL/LYSYL-TRNA SYNTHETASE"/>
    <property type="match status" value="1"/>
</dbReference>
<dbReference type="Pfam" id="PF00152">
    <property type="entry name" value="tRNA-synt_2"/>
    <property type="match status" value="1"/>
</dbReference>
<dbReference type="Pfam" id="PF01336">
    <property type="entry name" value="tRNA_anti-codon"/>
    <property type="match status" value="1"/>
</dbReference>
<dbReference type="PRINTS" id="PR01042">
    <property type="entry name" value="TRNASYNTHASP"/>
</dbReference>
<dbReference type="SUPFAM" id="SSF55681">
    <property type="entry name" value="Class II aaRS and biotin synthetases"/>
    <property type="match status" value="1"/>
</dbReference>
<dbReference type="SUPFAM" id="SSF50249">
    <property type="entry name" value="Nucleic acid-binding proteins"/>
    <property type="match status" value="1"/>
</dbReference>
<dbReference type="PROSITE" id="PS50862">
    <property type="entry name" value="AA_TRNA_LIGASE_II"/>
    <property type="match status" value="1"/>
</dbReference>
<comment type="catalytic activity">
    <reaction evidence="1">
        <text>tRNA(Asn) + L-asparagine + ATP = L-asparaginyl-tRNA(Asn) + AMP + diphosphate + H(+)</text>
        <dbReference type="Rhea" id="RHEA:11180"/>
        <dbReference type="Rhea" id="RHEA-COMP:9659"/>
        <dbReference type="Rhea" id="RHEA-COMP:9674"/>
        <dbReference type="ChEBI" id="CHEBI:15378"/>
        <dbReference type="ChEBI" id="CHEBI:30616"/>
        <dbReference type="ChEBI" id="CHEBI:33019"/>
        <dbReference type="ChEBI" id="CHEBI:58048"/>
        <dbReference type="ChEBI" id="CHEBI:78442"/>
        <dbReference type="ChEBI" id="CHEBI:78515"/>
        <dbReference type="ChEBI" id="CHEBI:456215"/>
        <dbReference type="EC" id="6.1.1.22"/>
    </reaction>
</comment>
<comment type="subunit">
    <text evidence="1">Homodimer.</text>
</comment>
<comment type="subcellular location">
    <subcellularLocation>
        <location evidence="1">Cytoplasm</location>
    </subcellularLocation>
</comment>
<comment type="similarity">
    <text evidence="1">Belongs to the class-II aminoacyl-tRNA synthetase family.</text>
</comment>
<keyword id="KW-0030">Aminoacyl-tRNA synthetase</keyword>
<keyword id="KW-0067">ATP-binding</keyword>
<keyword id="KW-0963">Cytoplasm</keyword>
<keyword id="KW-0436">Ligase</keyword>
<keyword id="KW-0547">Nucleotide-binding</keyword>
<keyword id="KW-0648">Protein biosynthesis</keyword>
<keyword id="KW-1185">Reference proteome</keyword>
<gene>
    <name evidence="1" type="primary">asnS</name>
    <name type="ordered locus">Sfum_2475</name>
</gene>